<evidence type="ECO:0000255" key="1">
    <source>
        <dbReference type="HAMAP-Rule" id="MF_00439"/>
    </source>
</evidence>
<gene>
    <name evidence="1" type="primary">ycf3</name>
</gene>
<sequence>MPRSQINGNFIDKTFSIVANILLRIIPTTSGEKEAFTYYRDGMSAQSEGNYAEALQNYYEAMRLEIDPYDRSYILYNIGLIHTSNGEHTKALEYYFRALERNPFLPQAFNNMAVICHYRGEQAIRQGDSEIAEAWFDQAAEYWKQAIALTPGNYIEAQNWLKITRRFE</sequence>
<feature type="chain" id="PRO_0000275620" description="Photosystem I assembly protein Ycf3">
    <location>
        <begin position="1"/>
        <end position="168"/>
    </location>
</feature>
<feature type="repeat" description="TPR 1">
    <location>
        <begin position="35"/>
        <end position="68"/>
    </location>
</feature>
<feature type="repeat" description="TPR 2">
    <location>
        <begin position="72"/>
        <end position="105"/>
    </location>
</feature>
<feature type="repeat" description="TPR 3">
    <location>
        <begin position="120"/>
        <end position="153"/>
    </location>
</feature>
<dbReference type="EMBL" id="DQ345959">
    <property type="protein sequence ID" value="ABC73629.1"/>
    <property type="molecule type" value="Genomic_DNA"/>
</dbReference>
<dbReference type="RefSeq" id="YP_538936.1">
    <property type="nucleotide sequence ID" value="NC_007944.1"/>
</dbReference>
<dbReference type="SMR" id="Q2L906"/>
<dbReference type="GeneID" id="3989215"/>
<dbReference type="KEGG" id="ghi:3989215"/>
<dbReference type="OrthoDB" id="3145at41938"/>
<dbReference type="Proteomes" id="UP000189702">
    <property type="component" value="Chloroplast Pltd"/>
</dbReference>
<dbReference type="GO" id="GO:0009535">
    <property type="term" value="C:chloroplast thylakoid membrane"/>
    <property type="evidence" value="ECO:0007669"/>
    <property type="project" value="UniProtKB-SubCell"/>
</dbReference>
<dbReference type="GO" id="GO:0015979">
    <property type="term" value="P:photosynthesis"/>
    <property type="evidence" value="ECO:0007669"/>
    <property type="project" value="UniProtKB-UniRule"/>
</dbReference>
<dbReference type="FunFam" id="1.25.40.10:FF:000004">
    <property type="entry name" value="Photosystem I assembly protein Ycf3"/>
    <property type="match status" value="1"/>
</dbReference>
<dbReference type="Gene3D" id="1.25.40.10">
    <property type="entry name" value="Tetratricopeptide repeat domain"/>
    <property type="match status" value="1"/>
</dbReference>
<dbReference type="HAMAP" id="MF_00439">
    <property type="entry name" value="Ycf3"/>
    <property type="match status" value="1"/>
</dbReference>
<dbReference type="InterPro" id="IPR022818">
    <property type="entry name" value="PSI_Ycf3_assembly"/>
</dbReference>
<dbReference type="InterPro" id="IPR011990">
    <property type="entry name" value="TPR-like_helical_dom_sf"/>
</dbReference>
<dbReference type="InterPro" id="IPR019734">
    <property type="entry name" value="TPR_rpt"/>
</dbReference>
<dbReference type="InterPro" id="IPR051685">
    <property type="entry name" value="Ycf3/AcsC/BcsC/TPR_MFPF"/>
</dbReference>
<dbReference type="NCBIfam" id="NF002725">
    <property type="entry name" value="PRK02603.1"/>
    <property type="match status" value="1"/>
</dbReference>
<dbReference type="PANTHER" id="PTHR44943">
    <property type="entry name" value="CELLULOSE SYNTHASE OPERON PROTEIN C"/>
    <property type="match status" value="1"/>
</dbReference>
<dbReference type="PANTHER" id="PTHR44943:SF8">
    <property type="entry name" value="TPR REPEAT-CONTAINING PROTEIN MJ0263"/>
    <property type="match status" value="1"/>
</dbReference>
<dbReference type="Pfam" id="PF00515">
    <property type="entry name" value="TPR_1"/>
    <property type="match status" value="1"/>
</dbReference>
<dbReference type="SMART" id="SM00028">
    <property type="entry name" value="TPR"/>
    <property type="match status" value="3"/>
</dbReference>
<dbReference type="SUPFAM" id="SSF48452">
    <property type="entry name" value="TPR-like"/>
    <property type="match status" value="1"/>
</dbReference>
<dbReference type="PROSITE" id="PS50005">
    <property type="entry name" value="TPR"/>
    <property type="match status" value="3"/>
</dbReference>
<dbReference type="PROSITE" id="PS50293">
    <property type="entry name" value="TPR_REGION"/>
    <property type="match status" value="2"/>
</dbReference>
<organism>
    <name type="scientific">Gossypium hirsutum</name>
    <name type="common">Upland cotton</name>
    <name type="synonym">Gossypium mexicanum</name>
    <dbReference type="NCBI Taxonomy" id="3635"/>
    <lineage>
        <taxon>Eukaryota</taxon>
        <taxon>Viridiplantae</taxon>
        <taxon>Streptophyta</taxon>
        <taxon>Embryophyta</taxon>
        <taxon>Tracheophyta</taxon>
        <taxon>Spermatophyta</taxon>
        <taxon>Magnoliopsida</taxon>
        <taxon>eudicotyledons</taxon>
        <taxon>Gunneridae</taxon>
        <taxon>Pentapetalae</taxon>
        <taxon>rosids</taxon>
        <taxon>malvids</taxon>
        <taxon>Malvales</taxon>
        <taxon>Malvaceae</taxon>
        <taxon>Malvoideae</taxon>
        <taxon>Gossypium</taxon>
    </lineage>
</organism>
<proteinExistence type="inferred from homology"/>
<geneLocation type="chloroplast"/>
<name>YCF3_GOSHI</name>
<reference key="1">
    <citation type="journal article" date="2006" name="BMC Genomics">
        <title>The complete chloroplast genome sequence of Gossypium hirsutum: organization and phylogenetic relationships to other angiosperms.</title>
        <authorList>
            <person name="Lee S.-B."/>
            <person name="Kaittanis C."/>
            <person name="Jansen R.K."/>
            <person name="Hostetler J.B."/>
            <person name="Tallon L.J."/>
            <person name="Town C.D."/>
            <person name="Daniell H."/>
        </authorList>
    </citation>
    <scope>NUCLEOTIDE SEQUENCE [LARGE SCALE GENOMIC DNA]</scope>
    <source>
        <strain>cv. Coker 310FR</strain>
    </source>
</reference>
<keyword id="KW-0150">Chloroplast</keyword>
<keyword id="KW-0472">Membrane</keyword>
<keyword id="KW-0602">Photosynthesis</keyword>
<keyword id="KW-0934">Plastid</keyword>
<keyword id="KW-1185">Reference proteome</keyword>
<keyword id="KW-0677">Repeat</keyword>
<keyword id="KW-0793">Thylakoid</keyword>
<keyword id="KW-0802">TPR repeat</keyword>
<protein>
    <recommendedName>
        <fullName evidence="1">Photosystem I assembly protein Ycf3</fullName>
    </recommendedName>
</protein>
<accession>Q2L906</accession>
<comment type="function">
    <text evidence="1">Essential for the assembly of the photosystem I (PSI) complex. May act as a chaperone-like factor to guide the assembly of the PSI subunits.</text>
</comment>
<comment type="subcellular location">
    <subcellularLocation>
        <location evidence="1">Plastid</location>
        <location evidence="1">Chloroplast thylakoid membrane</location>
        <topology evidence="1">Peripheral membrane protein</topology>
    </subcellularLocation>
</comment>
<comment type="similarity">
    <text evidence="1">Belongs to the Ycf3 family.</text>
</comment>